<evidence type="ECO:0000255" key="1">
    <source>
        <dbReference type="HAMAP-Rule" id="MF_00236"/>
    </source>
</evidence>
<evidence type="ECO:0000256" key="2">
    <source>
        <dbReference type="SAM" id="MobiDB-lite"/>
    </source>
</evidence>
<protein>
    <recommendedName>
        <fullName evidence="1">Sec-independent protein translocase protein TatA</fullName>
    </recommendedName>
</protein>
<feature type="chain" id="PRO_1000044350" description="Sec-independent protein translocase protein TatA">
    <location>
        <begin position="1"/>
        <end position="71"/>
    </location>
</feature>
<feature type="transmembrane region" description="Helical" evidence="1">
    <location>
        <begin position="9"/>
        <end position="29"/>
    </location>
</feature>
<feature type="region of interest" description="Disordered" evidence="2">
    <location>
        <begin position="43"/>
        <end position="71"/>
    </location>
</feature>
<feature type="compositionally biased region" description="Polar residues" evidence="2">
    <location>
        <begin position="52"/>
        <end position="71"/>
    </location>
</feature>
<comment type="function">
    <text evidence="1">Part of the twin-arginine translocation (Tat) system that transports large folded proteins containing a characteristic twin-arginine motif in their signal peptide across membranes. TatA could form the protein-conducting channel of the Tat system.</text>
</comment>
<comment type="subunit">
    <text evidence="1">The Tat system comprises two distinct complexes: a TatABC complex, containing multiple copies of TatA, TatB and TatC subunits, and a separate TatA complex, containing only TatA subunits. Substrates initially bind to the TatABC complex, which probably triggers association of the separate TatA complex to form the active translocon.</text>
</comment>
<comment type="subcellular location">
    <subcellularLocation>
        <location evidence="1">Cell inner membrane</location>
        <topology evidence="1">Single-pass membrane protein</topology>
    </subcellularLocation>
</comment>
<comment type="similarity">
    <text evidence="1">Belongs to the TatA/E family.</text>
</comment>
<sequence length="71" mass="7277">MFGLRMPELLLILAIVVILFGASRLPALGAGLGQGIRSFKKAFGGEDEKPTASGNGSTPTQSSSDQGSKQA</sequence>
<gene>
    <name evidence="1" type="primary">tatA</name>
    <name type="ordered locus">Adeh_1332</name>
</gene>
<reference key="1">
    <citation type="submission" date="2006-01" db="EMBL/GenBank/DDBJ databases">
        <title>Complete sequence of Anaeromyxobacter dehalogenans 2CP-C.</title>
        <authorList>
            <person name="Copeland A."/>
            <person name="Lucas S."/>
            <person name="Lapidus A."/>
            <person name="Barry K."/>
            <person name="Detter J.C."/>
            <person name="Glavina T."/>
            <person name="Hammon N."/>
            <person name="Israni S."/>
            <person name="Pitluck S."/>
            <person name="Brettin T."/>
            <person name="Bruce D."/>
            <person name="Han C."/>
            <person name="Tapia R."/>
            <person name="Gilna P."/>
            <person name="Kiss H."/>
            <person name="Schmutz J."/>
            <person name="Larimer F."/>
            <person name="Land M."/>
            <person name="Kyrpides N."/>
            <person name="Anderson I."/>
            <person name="Sanford R.A."/>
            <person name="Ritalahti K.M."/>
            <person name="Thomas H.S."/>
            <person name="Kirby J.R."/>
            <person name="Zhulin I.B."/>
            <person name="Loeffler F.E."/>
            <person name="Richardson P."/>
        </authorList>
    </citation>
    <scope>NUCLEOTIDE SEQUENCE [LARGE SCALE GENOMIC DNA]</scope>
    <source>
        <strain>2CP-C</strain>
    </source>
</reference>
<organism>
    <name type="scientific">Anaeromyxobacter dehalogenans (strain 2CP-C)</name>
    <dbReference type="NCBI Taxonomy" id="290397"/>
    <lineage>
        <taxon>Bacteria</taxon>
        <taxon>Pseudomonadati</taxon>
        <taxon>Myxococcota</taxon>
        <taxon>Myxococcia</taxon>
        <taxon>Myxococcales</taxon>
        <taxon>Cystobacterineae</taxon>
        <taxon>Anaeromyxobacteraceae</taxon>
        <taxon>Anaeromyxobacter</taxon>
    </lineage>
</organism>
<name>TATA_ANADE</name>
<dbReference type="EMBL" id="CP000251">
    <property type="protein sequence ID" value="ABC81106.1"/>
    <property type="molecule type" value="Genomic_DNA"/>
</dbReference>
<dbReference type="RefSeq" id="WP_011420389.1">
    <property type="nucleotide sequence ID" value="NC_007760.1"/>
</dbReference>
<dbReference type="SMR" id="Q2IQM4"/>
<dbReference type="STRING" id="290397.Adeh_1332"/>
<dbReference type="KEGG" id="ade:Adeh_1332"/>
<dbReference type="eggNOG" id="COG1826">
    <property type="taxonomic scope" value="Bacteria"/>
</dbReference>
<dbReference type="HOGENOM" id="CLU_086034_5_4_7"/>
<dbReference type="OrthoDB" id="9813726at2"/>
<dbReference type="Proteomes" id="UP000001935">
    <property type="component" value="Chromosome"/>
</dbReference>
<dbReference type="GO" id="GO:0033281">
    <property type="term" value="C:TAT protein transport complex"/>
    <property type="evidence" value="ECO:0007669"/>
    <property type="project" value="UniProtKB-UniRule"/>
</dbReference>
<dbReference type="GO" id="GO:0008320">
    <property type="term" value="F:protein transmembrane transporter activity"/>
    <property type="evidence" value="ECO:0007669"/>
    <property type="project" value="UniProtKB-UniRule"/>
</dbReference>
<dbReference type="GO" id="GO:0043953">
    <property type="term" value="P:protein transport by the Tat complex"/>
    <property type="evidence" value="ECO:0007669"/>
    <property type="project" value="UniProtKB-UniRule"/>
</dbReference>
<dbReference type="Gene3D" id="1.20.5.3310">
    <property type="match status" value="1"/>
</dbReference>
<dbReference type="HAMAP" id="MF_00236">
    <property type="entry name" value="TatA_E"/>
    <property type="match status" value="1"/>
</dbReference>
<dbReference type="InterPro" id="IPR003369">
    <property type="entry name" value="TatA/B/E"/>
</dbReference>
<dbReference type="InterPro" id="IPR006312">
    <property type="entry name" value="TatA/E"/>
</dbReference>
<dbReference type="NCBIfam" id="TIGR01411">
    <property type="entry name" value="tatAE"/>
    <property type="match status" value="1"/>
</dbReference>
<dbReference type="PANTHER" id="PTHR42982">
    <property type="entry name" value="SEC-INDEPENDENT PROTEIN TRANSLOCASE PROTEIN TATA"/>
    <property type="match status" value="1"/>
</dbReference>
<dbReference type="PANTHER" id="PTHR42982:SF1">
    <property type="entry name" value="SEC-INDEPENDENT PROTEIN TRANSLOCASE PROTEIN TATA"/>
    <property type="match status" value="1"/>
</dbReference>
<dbReference type="Pfam" id="PF02416">
    <property type="entry name" value="TatA_B_E"/>
    <property type="match status" value="1"/>
</dbReference>
<keyword id="KW-0997">Cell inner membrane</keyword>
<keyword id="KW-1003">Cell membrane</keyword>
<keyword id="KW-0472">Membrane</keyword>
<keyword id="KW-0653">Protein transport</keyword>
<keyword id="KW-1185">Reference proteome</keyword>
<keyword id="KW-0811">Translocation</keyword>
<keyword id="KW-0812">Transmembrane</keyword>
<keyword id="KW-1133">Transmembrane helix</keyword>
<keyword id="KW-0813">Transport</keyword>
<proteinExistence type="inferred from homology"/>
<accession>Q2IQM4</accession>